<reference key="1">
    <citation type="journal article" date="2006" name="J. Agric. Food Chem.">
        <title>Sequence analysis of a 'true' chalcone synthase (chs_H1) oligofamily from hop (Humulus lupulus L.) and PAP1 activation of chs_H1 in heterologous systems.</title>
        <authorList>
            <person name="Matousek J."/>
            <person name="Vrba L."/>
            <person name="Skopek J."/>
            <person name="Orctova L."/>
            <person name="Pesina K."/>
            <person name="Heyerick A."/>
            <person name="Baulcombe D."/>
            <person name="De Keukeleire D."/>
        </authorList>
    </citation>
    <scope>NUCLEOTIDE SEQUENCE [MRNA]</scope>
    <scope>GENE FAMILY</scope>
    <source>
        <strain>cv. Osvals's 72</strain>
        <tissue>Lupulin gland</tissue>
    </source>
</reference>
<reference key="2">
    <citation type="journal article" date="2019" name="Nat. Prod. Rep.">
        <title>Non-volatile natural products in plant glandular trichomes: chemistry, biological activities and biosynthesis.</title>
        <authorList>
            <person name="Liu Y."/>
            <person name="Jing S.-X."/>
            <person name="Luo S.-H."/>
            <person name="Li S.-H."/>
        </authorList>
    </citation>
    <scope>PATHWAY</scope>
    <scope>REVIEW</scope>
</reference>
<proteinExistence type="evidence at transcript level"/>
<sequence>MVTVEEVRKAQRAEGPATILAIGTATPANCILQSEYPDYYFRITNSEHKTELKEKFKRMCDKSMIRKRYMHLTEEILKENPNLCAYEAPSLDARQDMVVVEVPKLGKEAATKAIKEWGQPKSKITHVVFCTTSGVDMPGADYQLTKLLGLRPSVKRLMMYQQGCFAGGTVLRVAKDLAENNKGARVLVVCSEITAVTFRGPNDTHLDSLVGQALFGDGSAALIIGADPTPEIEKPIFELVSAAQTILPDSDGAIDGHLREVGLTFHLLKDVPGLISKNIEKSLVEAFKPLGISDWNSLFWIAHPGGPAILDQVESKLALKPEKLRATRHVLGEYGNMSSACVLFILDEMRRKCAEDGLKTTGEGLEWGVLFGFGPGLTVETVVLHSVGI</sequence>
<dbReference type="EC" id="2.3.1.74" evidence="2"/>
<dbReference type="EMBL" id="AM263200">
    <property type="protein sequence ID" value="CAK19318.1"/>
    <property type="molecule type" value="mRNA"/>
</dbReference>
<dbReference type="SMR" id="A0AMG8"/>
<dbReference type="BRENDA" id="2.3.1.74">
    <property type="organism ID" value="2716"/>
</dbReference>
<dbReference type="UniPathway" id="UPA00154"/>
<dbReference type="GO" id="GO:0005737">
    <property type="term" value="C:cytoplasm"/>
    <property type="evidence" value="ECO:0007669"/>
    <property type="project" value="UniProtKB-SubCell"/>
</dbReference>
<dbReference type="GO" id="GO:0016210">
    <property type="term" value="F:naringenin-chalcone synthase activity"/>
    <property type="evidence" value="ECO:0007669"/>
    <property type="project" value="UniProtKB-EC"/>
</dbReference>
<dbReference type="GO" id="GO:0009813">
    <property type="term" value="P:flavonoid biosynthetic process"/>
    <property type="evidence" value="ECO:0007669"/>
    <property type="project" value="UniProtKB-UniPathway"/>
</dbReference>
<dbReference type="GO" id="GO:0030639">
    <property type="term" value="P:polyketide biosynthetic process"/>
    <property type="evidence" value="ECO:0007669"/>
    <property type="project" value="TreeGrafter"/>
</dbReference>
<dbReference type="CDD" id="cd00831">
    <property type="entry name" value="CHS_like"/>
    <property type="match status" value="1"/>
</dbReference>
<dbReference type="FunFam" id="3.40.47.10:FF:000014">
    <property type="entry name" value="Chalcone synthase 1"/>
    <property type="match status" value="1"/>
</dbReference>
<dbReference type="FunFam" id="3.40.47.10:FF:000025">
    <property type="entry name" value="Chalcone synthase 2"/>
    <property type="match status" value="1"/>
</dbReference>
<dbReference type="Gene3D" id="3.40.47.10">
    <property type="match status" value="2"/>
</dbReference>
<dbReference type="InterPro" id="IPR012328">
    <property type="entry name" value="Chalcone/stilbene_synt_C"/>
</dbReference>
<dbReference type="InterPro" id="IPR001099">
    <property type="entry name" value="Chalcone/stilbene_synt_N"/>
</dbReference>
<dbReference type="InterPro" id="IPR018088">
    <property type="entry name" value="Chalcone/stilbene_synthase_AS"/>
</dbReference>
<dbReference type="InterPro" id="IPR011141">
    <property type="entry name" value="Polyketide_synthase_type-III"/>
</dbReference>
<dbReference type="InterPro" id="IPR016039">
    <property type="entry name" value="Thiolase-like"/>
</dbReference>
<dbReference type="PANTHER" id="PTHR11877:SF80">
    <property type="entry name" value="CHALCONE SYNTHASE 1"/>
    <property type="match status" value="1"/>
</dbReference>
<dbReference type="PANTHER" id="PTHR11877">
    <property type="entry name" value="HYDROXYMETHYLGLUTARYL-COA SYNTHASE"/>
    <property type="match status" value="1"/>
</dbReference>
<dbReference type="Pfam" id="PF02797">
    <property type="entry name" value="Chal_sti_synt_C"/>
    <property type="match status" value="1"/>
</dbReference>
<dbReference type="Pfam" id="PF00195">
    <property type="entry name" value="Chal_sti_synt_N"/>
    <property type="match status" value="1"/>
</dbReference>
<dbReference type="PIRSF" id="PIRSF000451">
    <property type="entry name" value="PKS_III"/>
    <property type="match status" value="1"/>
</dbReference>
<dbReference type="SUPFAM" id="SSF53901">
    <property type="entry name" value="Thiolase-like"/>
    <property type="match status" value="2"/>
</dbReference>
<dbReference type="PROSITE" id="PS00441">
    <property type="entry name" value="CHALCONE_SYNTH"/>
    <property type="match status" value="1"/>
</dbReference>
<gene>
    <name evidence="3" type="primary">chs_H1-132</name>
</gene>
<organism>
    <name type="scientific">Humulus lupulus</name>
    <name type="common">European hop</name>
    <dbReference type="NCBI Taxonomy" id="3486"/>
    <lineage>
        <taxon>Eukaryota</taxon>
        <taxon>Viridiplantae</taxon>
        <taxon>Streptophyta</taxon>
        <taxon>Embryophyta</taxon>
        <taxon>Tracheophyta</taxon>
        <taxon>Spermatophyta</taxon>
        <taxon>Magnoliopsida</taxon>
        <taxon>eudicotyledons</taxon>
        <taxon>Gunneridae</taxon>
        <taxon>Pentapetalae</taxon>
        <taxon>rosids</taxon>
        <taxon>fabids</taxon>
        <taxon>Rosales</taxon>
        <taxon>Cannabaceae</taxon>
        <taxon>Humulus</taxon>
    </lineage>
</organism>
<name>CHSH3_HUMLU</name>
<keyword id="KW-0012">Acyltransferase</keyword>
<keyword id="KW-0963">Cytoplasm</keyword>
<keyword id="KW-0284">Flavonoid biosynthesis</keyword>
<keyword id="KW-0808">Transferase</keyword>
<feature type="chain" id="PRO_0000452942" description="Chalcone synthase H2">
    <location>
        <begin position="1"/>
        <end position="389"/>
    </location>
</feature>
<feature type="active site" evidence="2">
    <location>
        <position position="164"/>
    </location>
</feature>
<comment type="function">
    <text evidence="1 5">Involved in the biosynthesis of prenylated phenolics natural products which contribute to the bitter taste of beer and display broad biological activities (Probable). Chalcone synthase that can use 4-coumaroyl-CoA to produce 4,2',4',6'-tetrahydroxychalcone (also termed naringenin-chalcone or chalcone) which can, under specific conditions, spontaneously isomerize into naringenin (By similarity).</text>
</comment>
<comment type="catalytic activity">
    <reaction evidence="2">
        <text>(E)-4-coumaroyl-CoA + 3 malonyl-CoA + 3 H(+) = 2',4,4',6'-tetrahydroxychalcone + 3 CO2 + 4 CoA</text>
        <dbReference type="Rhea" id="RHEA:11128"/>
        <dbReference type="ChEBI" id="CHEBI:15378"/>
        <dbReference type="ChEBI" id="CHEBI:15413"/>
        <dbReference type="ChEBI" id="CHEBI:16526"/>
        <dbReference type="ChEBI" id="CHEBI:57287"/>
        <dbReference type="ChEBI" id="CHEBI:57384"/>
        <dbReference type="ChEBI" id="CHEBI:85008"/>
        <dbReference type="EC" id="2.3.1.74"/>
    </reaction>
</comment>
<comment type="pathway">
    <text evidence="5">Secondary metabolite biosynthesis; flavonoid biosynthesis.</text>
</comment>
<comment type="subcellular location">
    <subcellularLocation>
        <location evidence="1">Cytoplasm</location>
    </subcellularLocation>
</comment>
<comment type="similarity">
    <text evidence="4">Belongs to the thiolase-like superfamily. Chalcone/stilbene synthases family.</text>
</comment>
<protein>
    <recommendedName>
        <fullName evidence="4">Chalcone synthase H2</fullName>
        <shortName evidence="3">CHS_H1-132</shortName>
        <ecNumber evidence="2">2.3.1.74</ecNumber>
    </recommendedName>
    <alternativeName>
        <fullName evidence="3">Naringenin-chalcone synthase CHS_H1-132</fullName>
    </alternativeName>
</protein>
<accession>A0AMG8</accession>
<evidence type="ECO:0000250" key="1">
    <source>
        <dbReference type="UniProtKB" id="Q9FEY5"/>
    </source>
</evidence>
<evidence type="ECO:0000255" key="2">
    <source>
        <dbReference type="PROSITE-ProRule" id="PRU10023"/>
    </source>
</evidence>
<evidence type="ECO:0000303" key="3">
    <source>
    </source>
</evidence>
<evidence type="ECO:0000305" key="4"/>
<evidence type="ECO:0000305" key="5">
    <source>
    </source>
</evidence>